<proteinExistence type="inferred from homology"/>
<protein>
    <recommendedName>
        <fullName evidence="1">Homoserine kinase</fullName>
        <shortName evidence="1">HK</shortName>
        <shortName evidence="1">HSK</shortName>
        <ecNumber evidence="1">2.7.1.39</ecNumber>
    </recommendedName>
</protein>
<accession>A4Z217</accession>
<sequence length="323" mass="35355">MAVYTDVAADELADFLKTYDIGELLSYKGIAEGVENSNFLLHTTKGSYILTLYEKRVAVDDLPYFLGLMAHLAERGVNCPQPARNRDGAVYSSLAGRPAAIINFLEGMWPRKPAVVHCAGVGEALARMHLAGRDFPLVRKNPLSVSGWQSLFAQAADRADTVQAGLSALLSTELDYLARAWPTDLPEGVIHADLFPDNVFFLGDHLSGLIDFPFSCNDILAYDVAICLNAWCFEADHSLNVTKARAFFNAYGRARPLSDAELEALPLLARGAAIRFLLTRLVDWLNVPAGALVKPKDPLEYVRKLRFHQAVTSARDYGIGASA</sequence>
<gene>
    <name evidence="1" type="primary">thrB</name>
    <name type="ordered locus">BRADO6587</name>
</gene>
<evidence type="ECO:0000255" key="1">
    <source>
        <dbReference type="HAMAP-Rule" id="MF_00301"/>
    </source>
</evidence>
<dbReference type="EC" id="2.7.1.39" evidence="1"/>
<dbReference type="EMBL" id="CU234118">
    <property type="protein sequence ID" value="CAL80193.1"/>
    <property type="molecule type" value="Genomic_DNA"/>
</dbReference>
<dbReference type="RefSeq" id="WP_012030065.1">
    <property type="nucleotide sequence ID" value="NC_009445.1"/>
</dbReference>
<dbReference type="SMR" id="A4Z217"/>
<dbReference type="STRING" id="114615.BRADO6587"/>
<dbReference type="KEGG" id="bra:BRADO6587"/>
<dbReference type="eggNOG" id="COG2334">
    <property type="taxonomic scope" value="Bacteria"/>
</dbReference>
<dbReference type="HOGENOM" id="CLU_053300_1_0_5"/>
<dbReference type="OrthoDB" id="9777460at2"/>
<dbReference type="UniPathway" id="UPA00050">
    <property type="reaction ID" value="UER00064"/>
</dbReference>
<dbReference type="Proteomes" id="UP000001994">
    <property type="component" value="Chromosome"/>
</dbReference>
<dbReference type="GO" id="GO:0005524">
    <property type="term" value="F:ATP binding"/>
    <property type="evidence" value="ECO:0007669"/>
    <property type="project" value="UniProtKB-KW"/>
</dbReference>
<dbReference type="GO" id="GO:0004413">
    <property type="term" value="F:homoserine kinase activity"/>
    <property type="evidence" value="ECO:0007669"/>
    <property type="project" value="UniProtKB-UniRule"/>
</dbReference>
<dbReference type="GO" id="GO:0009088">
    <property type="term" value="P:threonine biosynthetic process"/>
    <property type="evidence" value="ECO:0007669"/>
    <property type="project" value="UniProtKB-UniRule"/>
</dbReference>
<dbReference type="CDD" id="cd05153">
    <property type="entry name" value="HomoserineK_II"/>
    <property type="match status" value="1"/>
</dbReference>
<dbReference type="FunFam" id="3.90.1200.10:FF:000041">
    <property type="entry name" value="Homoserine kinase"/>
    <property type="match status" value="1"/>
</dbReference>
<dbReference type="Gene3D" id="3.90.1200.10">
    <property type="match status" value="1"/>
</dbReference>
<dbReference type="Gene3D" id="3.30.200.20">
    <property type="entry name" value="Phosphorylase Kinase, domain 1"/>
    <property type="match status" value="1"/>
</dbReference>
<dbReference type="HAMAP" id="MF_00301">
    <property type="entry name" value="Homoser_kinase_2"/>
    <property type="match status" value="1"/>
</dbReference>
<dbReference type="InterPro" id="IPR002575">
    <property type="entry name" value="Aminoglycoside_PTrfase"/>
</dbReference>
<dbReference type="InterPro" id="IPR005280">
    <property type="entry name" value="Homoserine_kinase_II"/>
</dbReference>
<dbReference type="InterPro" id="IPR011009">
    <property type="entry name" value="Kinase-like_dom_sf"/>
</dbReference>
<dbReference type="InterPro" id="IPR050249">
    <property type="entry name" value="Pseudomonas-type_ThrB"/>
</dbReference>
<dbReference type="NCBIfam" id="NF003558">
    <property type="entry name" value="PRK05231.1"/>
    <property type="match status" value="1"/>
</dbReference>
<dbReference type="NCBIfam" id="TIGR00938">
    <property type="entry name" value="thrB_alt"/>
    <property type="match status" value="1"/>
</dbReference>
<dbReference type="PANTHER" id="PTHR21064:SF6">
    <property type="entry name" value="AMINOGLYCOSIDE PHOSPHOTRANSFERASE DOMAIN-CONTAINING PROTEIN"/>
    <property type="match status" value="1"/>
</dbReference>
<dbReference type="PANTHER" id="PTHR21064">
    <property type="entry name" value="AMINOGLYCOSIDE PHOSPHOTRANSFERASE DOMAIN-CONTAINING PROTEIN-RELATED"/>
    <property type="match status" value="1"/>
</dbReference>
<dbReference type="Pfam" id="PF01636">
    <property type="entry name" value="APH"/>
    <property type="match status" value="1"/>
</dbReference>
<dbReference type="SUPFAM" id="SSF56112">
    <property type="entry name" value="Protein kinase-like (PK-like)"/>
    <property type="match status" value="1"/>
</dbReference>
<comment type="catalytic activity">
    <reaction evidence="1">
        <text>L-homoserine + ATP = O-phospho-L-homoserine + ADP + H(+)</text>
        <dbReference type="Rhea" id="RHEA:13985"/>
        <dbReference type="ChEBI" id="CHEBI:15378"/>
        <dbReference type="ChEBI" id="CHEBI:30616"/>
        <dbReference type="ChEBI" id="CHEBI:57476"/>
        <dbReference type="ChEBI" id="CHEBI:57590"/>
        <dbReference type="ChEBI" id="CHEBI:456216"/>
        <dbReference type="EC" id="2.7.1.39"/>
    </reaction>
</comment>
<comment type="pathway">
    <text evidence="1">Amino-acid biosynthesis; L-threonine biosynthesis; L-threonine from L-aspartate: step 4/5.</text>
</comment>
<comment type="similarity">
    <text evidence="1">Belongs to the pseudomonas-type ThrB family.</text>
</comment>
<name>KHSE_BRASO</name>
<reference key="1">
    <citation type="journal article" date="2007" name="Science">
        <title>Legumes symbioses: absence of nod genes in photosynthetic bradyrhizobia.</title>
        <authorList>
            <person name="Giraud E."/>
            <person name="Moulin L."/>
            <person name="Vallenet D."/>
            <person name="Barbe V."/>
            <person name="Cytryn E."/>
            <person name="Avarre J.-C."/>
            <person name="Jaubert M."/>
            <person name="Simon D."/>
            <person name="Cartieaux F."/>
            <person name="Prin Y."/>
            <person name="Bena G."/>
            <person name="Hannibal L."/>
            <person name="Fardoux J."/>
            <person name="Kojadinovic M."/>
            <person name="Vuillet L."/>
            <person name="Lajus A."/>
            <person name="Cruveiller S."/>
            <person name="Rouy Z."/>
            <person name="Mangenot S."/>
            <person name="Segurens B."/>
            <person name="Dossat C."/>
            <person name="Franck W.L."/>
            <person name="Chang W.-S."/>
            <person name="Saunders E."/>
            <person name="Bruce D."/>
            <person name="Richardson P."/>
            <person name="Normand P."/>
            <person name="Dreyfus B."/>
            <person name="Pignol D."/>
            <person name="Stacey G."/>
            <person name="Emerich D."/>
            <person name="Vermeglio A."/>
            <person name="Medigue C."/>
            <person name="Sadowsky M."/>
        </authorList>
    </citation>
    <scope>NUCLEOTIDE SEQUENCE [LARGE SCALE GENOMIC DNA]</scope>
    <source>
        <strain>ORS 278</strain>
    </source>
</reference>
<keyword id="KW-0028">Amino-acid biosynthesis</keyword>
<keyword id="KW-0067">ATP-binding</keyword>
<keyword id="KW-0418">Kinase</keyword>
<keyword id="KW-0547">Nucleotide-binding</keyword>
<keyword id="KW-1185">Reference proteome</keyword>
<keyword id="KW-0791">Threonine biosynthesis</keyword>
<keyword id="KW-0808">Transferase</keyword>
<organism>
    <name type="scientific">Bradyrhizobium sp. (strain ORS 278)</name>
    <dbReference type="NCBI Taxonomy" id="114615"/>
    <lineage>
        <taxon>Bacteria</taxon>
        <taxon>Pseudomonadati</taxon>
        <taxon>Pseudomonadota</taxon>
        <taxon>Alphaproteobacteria</taxon>
        <taxon>Hyphomicrobiales</taxon>
        <taxon>Nitrobacteraceae</taxon>
        <taxon>Bradyrhizobium</taxon>
    </lineage>
</organism>
<feature type="chain" id="PRO_0000300781" description="Homoserine kinase">
    <location>
        <begin position="1"/>
        <end position="323"/>
    </location>
</feature>